<organism>
    <name type="scientific">Neisseria meningitidis serogroup C (strain 053442)</name>
    <dbReference type="NCBI Taxonomy" id="374833"/>
    <lineage>
        <taxon>Bacteria</taxon>
        <taxon>Pseudomonadati</taxon>
        <taxon>Pseudomonadota</taxon>
        <taxon>Betaproteobacteria</taxon>
        <taxon>Neisseriales</taxon>
        <taxon>Neisseriaceae</taxon>
        <taxon>Neisseria</taxon>
    </lineage>
</organism>
<evidence type="ECO:0000255" key="1">
    <source>
        <dbReference type="HAMAP-Rule" id="MF_01810"/>
    </source>
</evidence>
<reference key="1">
    <citation type="journal article" date="2008" name="Genomics">
        <title>Characterization of ST-4821 complex, a unique Neisseria meningitidis clone.</title>
        <authorList>
            <person name="Peng J."/>
            <person name="Yang L."/>
            <person name="Yang F."/>
            <person name="Yang J."/>
            <person name="Yan Y."/>
            <person name="Nie H."/>
            <person name="Zhang X."/>
            <person name="Xiong Z."/>
            <person name="Jiang Y."/>
            <person name="Cheng F."/>
            <person name="Xu X."/>
            <person name="Chen S."/>
            <person name="Sun L."/>
            <person name="Li W."/>
            <person name="Shen Y."/>
            <person name="Shao Z."/>
            <person name="Liang X."/>
            <person name="Xu J."/>
            <person name="Jin Q."/>
        </authorList>
    </citation>
    <scope>NUCLEOTIDE SEQUENCE [LARGE SCALE GENOMIC DNA]</scope>
    <source>
        <strain>053442</strain>
    </source>
</reference>
<accession>A9M152</accession>
<sequence length="545" mass="60698">MDFKRLTAFFAIALVIMIGWEKMFPTPKPVPAPQQTAQQQAVTASAEAALAPATPITVTTDTVQAVIDEKSGDLRRLTLLKYKATGDENKPFILFGDGKEYTYVAQSELLDAQGNNILKGIGFSAPKKQYSLEGDKVEVRLSAPETRGLKIDKVYTFTKGSYLVNVRFDIANGSGQTANLSADYRIVRDHSEPEGQGYFTHSYVGPVVYTPEGNFQKVSFSDLDDDAKSGKSEAEYIRKTPTGWLGMIEHHFMSTWILQPKGGQSVCAAGDCRIDIKRRNDKLYSTSVSVPLAAIQNGAKSEASINLYAGPQTTSVIANIADNLQLAKDYGKVHWFASPLFWLLNQLHNIIGNWGWAIIVLTIIVKAVLYPLTNASYRSMAKMRAAAPKLQAIKEKYGDDRMAQQQAMMQLYTDEKINPLGGCLPMLLQIPVFIGLYWALFASVELRQAPWLGWITDLSRADPYYILPIIMAATMFAQTYLNPPPTDPMQAKMMKIMPLVFSVMFFFFPAGLVLYWVVNNLLTIAQQWHINRSIEKQRAQGEVVS</sequence>
<name>YIDC_NEIM0</name>
<gene>
    <name evidence="1" type="primary">yidC</name>
    <name type="ordered locus">NMCC_0313</name>
</gene>
<protein>
    <recommendedName>
        <fullName evidence="1">Membrane protein insertase YidC</fullName>
    </recommendedName>
    <alternativeName>
        <fullName evidence="1">Foldase YidC</fullName>
    </alternativeName>
    <alternativeName>
        <fullName evidence="1">Membrane integrase YidC</fullName>
    </alternativeName>
    <alternativeName>
        <fullName evidence="1">Membrane protein YidC</fullName>
    </alternativeName>
</protein>
<feature type="chain" id="PRO_1000088256" description="Membrane protein insertase YidC">
    <location>
        <begin position="1"/>
        <end position="545"/>
    </location>
</feature>
<feature type="transmembrane region" description="Helical" evidence="1">
    <location>
        <begin position="350"/>
        <end position="370"/>
    </location>
</feature>
<feature type="transmembrane region" description="Helical" evidence="1">
    <location>
        <begin position="424"/>
        <end position="444"/>
    </location>
</feature>
<feature type="transmembrane region" description="Helical" evidence="1">
    <location>
        <begin position="461"/>
        <end position="481"/>
    </location>
</feature>
<feature type="transmembrane region" description="Helical" evidence="1">
    <location>
        <begin position="498"/>
        <end position="518"/>
    </location>
</feature>
<keyword id="KW-0997">Cell inner membrane</keyword>
<keyword id="KW-1003">Cell membrane</keyword>
<keyword id="KW-0143">Chaperone</keyword>
<keyword id="KW-0472">Membrane</keyword>
<keyword id="KW-0653">Protein transport</keyword>
<keyword id="KW-0812">Transmembrane</keyword>
<keyword id="KW-1133">Transmembrane helix</keyword>
<keyword id="KW-0813">Transport</keyword>
<dbReference type="EMBL" id="CP000381">
    <property type="protein sequence ID" value="ABX72521.1"/>
    <property type="molecule type" value="Genomic_DNA"/>
</dbReference>
<dbReference type="RefSeq" id="WP_002219851.1">
    <property type="nucleotide sequence ID" value="NC_010120.1"/>
</dbReference>
<dbReference type="SMR" id="A9M152"/>
<dbReference type="GeneID" id="93386811"/>
<dbReference type="KEGG" id="nmn:NMCC_0313"/>
<dbReference type="HOGENOM" id="CLU_016535_3_0_4"/>
<dbReference type="Proteomes" id="UP000001177">
    <property type="component" value="Chromosome"/>
</dbReference>
<dbReference type="GO" id="GO:0005886">
    <property type="term" value="C:plasma membrane"/>
    <property type="evidence" value="ECO:0007669"/>
    <property type="project" value="UniProtKB-SubCell"/>
</dbReference>
<dbReference type="GO" id="GO:0032977">
    <property type="term" value="F:membrane insertase activity"/>
    <property type="evidence" value="ECO:0007669"/>
    <property type="project" value="InterPro"/>
</dbReference>
<dbReference type="GO" id="GO:0051205">
    <property type="term" value="P:protein insertion into membrane"/>
    <property type="evidence" value="ECO:0007669"/>
    <property type="project" value="TreeGrafter"/>
</dbReference>
<dbReference type="GO" id="GO:0015031">
    <property type="term" value="P:protein transport"/>
    <property type="evidence" value="ECO:0007669"/>
    <property type="project" value="UniProtKB-KW"/>
</dbReference>
<dbReference type="CDD" id="cd20070">
    <property type="entry name" value="5TM_YidC_Alb3"/>
    <property type="match status" value="1"/>
</dbReference>
<dbReference type="CDD" id="cd19961">
    <property type="entry name" value="EcYidC-like_peri"/>
    <property type="match status" value="1"/>
</dbReference>
<dbReference type="FunFam" id="2.70.98.90:FF:000003">
    <property type="entry name" value="Membrane protein insertase YidC"/>
    <property type="match status" value="1"/>
</dbReference>
<dbReference type="Gene3D" id="2.70.98.90">
    <property type="match status" value="1"/>
</dbReference>
<dbReference type="HAMAP" id="MF_01810">
    <property type="entry name" value="YidC_type1"/>
    <property type="match status" value="1"/>
</dbReference>
<dbReference type="InterPro" id="IPR019998">
    <property type="entry name" value="Membr_insert_YidC"/>
</dbReference>
<dbReference type="InterPro" id="IPR028053">
    <property type="entry name" value="Membr_insert_YidC_N"/>
</dbReference>
<dbReference type="InterPro" id="IPR001708">
    <property type="entry name" value="YidC/ALB3/OXA1/COX18"/>
</dbReference>
<dbReference type="InterPro" id="IPR028055">
    <property type="entry name" value="YidC/Oxa/ALB_C"/>
</dbReference>
<dbReference type="InterPro" id="IPR047196">
    <property type="entry name" value="YidC_ALB_C"/>
</dbReference>
<dbReference type="InterPro" id="IPR038221">
    <property type="entry name" value="YidC_periplasmic_sf"/>
</dbReference>
<dbReference type="NCBIfam" id="NF002352">
    <property type="entry name" value="PRK01318.1-3"/>
    <property type="match status" value="1"/>
</dbReference>
<dbReference type="NCBIfam" id="TIGR03593">
    <property type="entry name" value="yidC_nterm"/>
    <property type="match status" value="1"/>
</dbReference>
<dbReference type="NCBIfam" id="TIGR03592">
    <property type="entry name" value="yidC_oxa1_cterm"/>
    <property type="match status" value="1"/>
</dbReference>
<dbReference type="PANTHER" id="PTHR12428:SF65">
    <property type="entry name" value="CYTOCHROME C OXIDASE ASSEMBLY PROTEIN COX18, MITOCHONDRIAL"/>
    <property type="match status" value="1"/>
</dbReference>
<dbReference type="PANTHER" id="PTHR12428">
    <property type="entry name" value="OXA1"/>
    <property type="match status" value="1"/>
</dbReference>
<dbReference type="Pfam" id="PF02096">
    <property type="entry name" value="60KD_IMP"/>
    <property type="match status" value="1"/>
</dbReference>
<dbReference type="Pfam" id="PF14849">
    <property type="entry name" value="YidC_periplas"/>
    <property type="match status" value="1"/>
</dbReference>
<dbReference type="PRINTS" id="PR00701">
    <property type="entry name" value="60KDINNERMP"/>
</dbReference>
<dbReference type="PRINTS" id="PR01900">
    <property type="entry name" value="YIDCPROTEIN"/>
</dbReference>
<proteinExistence type="inferred from homology"/>
<comment type="function">
    <text evidence="1">Required for the insertion and/or proper folding and/or complex formation of integral membrane proteins into the membrane. Involved in integration of membrane proteins that insert both dependently and independently of the Sec translocase complex, as well as at least some lipoproteins. Aids folding of multispanning membrane proteins.</text>
</comment>
<comment type="subunit">
    <text evidence="1">Interacts with the Sec translocase complex via SecD. Specifically interacts with transmembrane segments of nascent integral membrane proteins during membrane integration.</text>
</comment>
<comment type="subcellular location">
    <subcellularLocation>
        <location evidence="1">Cell inner membrane</location>
        <topology evidence="1">Multi-pass membrane protein</topology>
    </subcellularLocation>
</comment>
<comment type="similarity">
    <text evidence="1">Belongs to the OXA1/ALB3/YidC family. Type 1 subfamily.</text>
</comment>